<keyword id="KW-0007">Acetylation</keyword>
<keyword id="KW-0025">Alternative splicing</keyword>
<keyword id="KW-0175">Coiled coil</keyword>
<keyword id="KW-0479">Metal-binding</keyword>
<keyword id="KW-0597">Phosphoprotein</keyword>
<keyword id="KW-1267">Proteomics identification</keyword>
<keyword id="KW-1185">Reference proteome</keyword>
<keyword id="KW-0862">Zinc</keyword>
<keyword id="KW-0863">Zinc-finger</keyword>
<accession>Q8ND24</accession>
<accession>B2RUW0</accession>
<accession>B4DTD1</accession>
<organism>
    <name type="scientific">Homo sapiens</name>
    <name type="common">Human</name>
    <dbReference type="NCBI Taxonomy" id="9606"/>
    <lineage>
        <taxon>Eukaryota</taxon>
        <taxon>Metazoa</taxon>
        <taxon>Chordata</taxon>
        <taxon>Craniata</taxon>
        <taxon>Vertebrata</taxon>
        <taxon>Euteleostomi</taxon>
        <taxon>Mammalia</taxon>
        <taxon>Eutheria</taxon>
        <taxon>Euarchontoglires</taxon>
        <taxon>Primates</taxon>
        <taxon>Haplorrhini</taxon>
        <taxon>Catarrhini</taxon>
        <taxon>Hominidae</taxon>
        <taxon>Homo</taxon>
    </lineage>
</organism>
<sequence>MAASEVAGVVANAPSPPESSSLCASKSDEGLPDGLSTKDSAQKQKNSPLLSVSSQTITKENNRNVHLEHSEQNPGSSAGDTSAAHQVVLGENLIATALCLSGSGSQSDLKDVASTAGEEGDTSLRESLHPVTRSLKAGCHTKQLASRNCSEEKSPQTSILKEGNRDTSLDFRPVVSPANGVEGVRVDQDDDQDSSSLKLSQNIAVQTDFKTADSEVNTDQDIEKNLDKMMTERTLLKERYQEVLDKQRQVENQLQVQLKQLQQRREEEMKNHQEILKAIQDVTIKREETKKKIEKEKKEFLQKEQDLKAEIEKLCEKGRREVWEMELDRLKNQDGEINRNIMEETERAWKAEILSLESRKELLVLKLEEAEKEAELHLTYLKSTPPTLETVRSKQEWETRLNGVRIMKKNVRDQFNSHIQLVRNGAKLSSLPQIPTPTLPPPPSETDFMLQVFQPSPSLAPRMPFSIGQVTMPMVMPSADPRSLSFPILNPALSQPSQPSSPLPGSHGRNSPGLGSLVSPHGPHMPPAASIPPPPGLGGVKASAETPRPQPVDKLEKILEKLLTRFPQCNKAQMTNILQQIKTARTTMAGLTMEELIQLVAARLAEHERVAASTQPLGRIRALFPAPLAQISTPMFLPSAQVSYPGRSSHAPATCKLCLMCQKLVQPSELHPMACTHVLHKECIKFWAQTNTNDTCPFCPTLK</sequence>
<proteinExistence type="evidence at protein level"/>
<gene>
    <name type="primary">RNF214</name>
</gene>
<feature type="initiator methionine" description="Removed" evidence="7">
    <location>
        <position position="1"/>
    </location>
</feature>
<feature type="chain" id="PRO_0000280546" description="RING finger protein 214">
    <location>
        <begin position="2"/>
        <end position="703"/>
    </location>
</feature>
<feature type="zinc finger region" description="RING-type; atypical" evidence="3">
    <location>
        <begin position="658"/>
        <end position="700"/>
    </location>
</feature>
<feature type="region of interest" description="Disordered" evidence="4">
    <location>
        <begin position="1"/>
        <end position="59"/>
    </location>
</feature>
<feature type="region of interest" description="Disordered" evidence="4">
    <location>
        <begin position="104"/>
        <end position="134"/>
    </location>
</feature>
<feature type="region of interest" description="Disordered" evidence="4">
    <location>
        <begin position="146"/>
        <end position="197"/>
    </location>
</feature>
<feature type="region of interest" description="Disordered" evidence="4">
    <location>
        <begin position="486"/>
        <end position="552"/>
    </location>
</feature>
<feature type="coiled-coil region" evidence="2">
    <location>
        <begin position="220"/>
        <end position="379"/>
    </location>
</feature>
<feature type="compositionally biased region" description="Polar residues" evidence="4">
    <location>
        <begin position="37"/>
        <end position="59"/>
    </location>
</feature>
<feature type="compositionally biased region" description="Low complexity" evidence="4">
    <location>
        <begin position="493"/>
        <end position="504"/>
    </location>
</feature>
<feature type="compositionally biased region" description="Pro residues" evidence="4">
    <location>
        <begin position="523"/>
        <end position="536"/>
    </location>
</feature>
<feature type="modified residue" description="N-acetylalanine" evidence="7">
    <location>
        <position position="2"/>
    </location>
</feature>
<feature type="modified residue" description="Phosphoserine" evidence="10">
    <location>
        <position position="15"/>
    </location>
</feature>
<feature type="modified residue" description="Phosphoserine" evidence="10">
    <location>
        <position position="40"/>
    </location>
</feature>
<feature type="modified residue" description="Phosphoserine" evidence="6 9 10">
    <location>
        <position position="47"/>
    </location>
</feature>
<feature type="modified residue" description="Phosphoserine" evidence="10">
    <location>
        <position position="54"/>
    </location>
</feature>
<feature type="modified residue" description="Phosphoserine" evidence="10">
    <location>
        <position position="176"/>
    </location>
</feature>
<feature type="modified residue" description="Phosphoserine" evidence="1">
    <location>
        <position position="196"/>
    </location>
</feature>
<feature type="modified residue" description="Phosphoserine" evidence="6">
    <location>
        <position position="497"/>
    </location>
</feature>
<feature type="modified residue" description="Phosphoserine" evidence="6">
    <location>
        <position position="511"/>
    </location>
</feature>
<feature type="modified residue" description="Phosphoserine" evidence="8">
    <location>
        <position position="516"/>
    </location>
</feature>
<feature type="splice variant" id="VSP_054566" description="In isoform 2." evidence="5">
    <location>
        <begin position="52"/>
        <end position="206"/>
    </location>
</feature>
<comment type="alternative products">
    <event type="alternative splicing"/>
    <isoform>
        <id>Q8ND24-1</id>
        <name>1</name>
        <sequence type="displayed"/>
    </isoform>
    <isoform>
        <id>Q8ND24-2</id>
        <name>2</name>
        <sequence type="described" ref="VSP_054566"/>
    </isoform>
</comment>
<dbReference type="EMBL" id="AK298923">
    <property type="protein sequence ID" value="BAG61028.1"/>
    <property type="molecule type" value="mRNA"/>
</dbReference>
<dbReference type="EMBL" id="AK300160">
    <property type="protein sequence ID" value="BAG61943.1"/>
    <property type="molecule type" value="mRNA"/>
</dbReference>
<dbReference type="EMBL" id="AP000892">
    <property type="status" value="NOT_ANNOTATED_CDS"/>
    <property type="molecule type" value="Genomic_DNA"/>
</dbReference>
<dbReference type="EMBL" id="CH471065">
    <property type="protein sequence ID" value="EAW67306.1"/>
    <property type="molecule type" value="Genomic_DNA"/>
</dbReference>
<dbReference type="EMBL" id="BC031347">
    <property type="status" value="NOT_ANNOTATED_CDS"/>
    <property type="molecule type" value="mRNA"/>
</dbReference>
<dbReference type="EMBL" id="BC146891">
    <property type="protein sequence ID" value="AAI46892.1"/>
    <property type="molecule type" value="mRNA"/>
</dbReference>
<dbReference type="EMBL" id="BC146901">
    <property type="protein sequence ID" value="AAI46902.1"/>
    <property type="molecule type" value="mRNA"/>
</dbReference>
<dbReference type="EMBL" id="BC064581">
    <property type="status" value="NOT_ANNOTATED_CDS"/>
    <property type="molecule type" value="mRNA"/>
</dbReference>
<dbReference type="EMBL" id="AL834448">
    <property type="protein sequence ID" value="CAD39108.1"/>
    <property type="molecule type" value="mRNA"/>
</dbReference>
<dbReference type="CCDS" id="CCDS41720.1">
    <molecule id="Q8ND24-1"/>
</dbReference>
<dbReference type="CCDS" id="CCDS60976.1">
    <molecule id="Q8ND24-2"/>
</dbReference>
<dbReference type="RefSeq" id="NP_001070707.1">
    <molecule id="Q8ND24-1"/>
    <property type="nucleotide sequence ID" value="NM_001077239.2"/>
</dbReference>
<dbReference type="RefSeq" id="NP_001265178.1">
    <molecule id="Q8ND24-2"/>
    <property type="nucleotide sequence ID" value="NM_001278249.2"/>
</dbReference>
<dbReference type="RefSeq" id="NP_997226.2">
    <molecule id="Q8ND24-1"/>
    <property type="nucleotide sequence ID" value="NM_207343.4"/>
</dbReference>
<dbReference type="SMR" id="Q8ND24"/>
<dbReference type="BioGRID" id="129202">
    <property type="interactions" value="107"/>
</dbReference>
<dbReference type="FunCoup" id="Q8ND24">
    <property type="interactions" value="2392"/>
</dbReference>
<dbReference type="IntAct" id="Q8ND24">
    <property type="interactions" value="23"/>
</dbReference>
<dbReference type="MINT" id="Q8ND24"/>
<dbReference type="STRING" id="9606.ENSP00000300650"/>
<dbReference type="GlyGen" id="Q8ND24">
    <property type="glycosylation" value="2 sites, 1 O-linked glycan (2 sites)"/>
</dbReference>
<dbReference type="iPTMnet" id="Q8ND24"/>
<dbReference type="PhosphoSitePlus" id="Q8ND24"/>
<dbReference type="BioMuta" id="RNF214"/>
<dbReference type="DMDM" id="134035028"/>
<dbReference type="jPOST" id="Q8ND24"/>
<dbReference type="MassIVE" id="Q8ND24"/>
<dbReference type="PaxDb" id="9606-ENSP00000300650"/>
<dbReference type="PeptideAtlas" id="Q8ND24"/>
<dbReference type="ProteomicsDB" id="5098"/>
<dbReference type="ProteomicsDB" id="72975">
    <molecule id="Q8ND24-1"/>
</dbReference>
<dbReference type="Pumba" id="Q8ND24"/>
<dbReference type="Antibodypedia" id="32345">
    <property type="antibodies" value="36 antibodies from 15 providers"/>
</dbReference>
<dbReference type="DNASU" id="257160"/>
<dbReference type="Ensembl" id="ENST00000300650.9">
    <molecule id="Q8ND24-1"/>
    <property type="protein sequence ID" value="ENSP00000300650.4"/>
    <property type="gene ID" value="ENSG00000167257.11"/>
</dbReference>
<dbReference type="Ensembl" id="ENST00000531287.5">
    <molecule id="Q8ND24-2"/>
    <property type="protein sequence ID" value="ENSP00000435361.1"/>
    <property type="gene ID" value="ENSG00000167257.11"/>
</dbReference>
<dbReference type="Ensembl" id="ENST00000531452.5">
    <molecule id="Q8ND24-1"/>
    <property type="protein sequence ID" value="ENSP00000431643.1"/>
    <property type="gene ID" value="ENSG00000167257.11"/>
</dbReference>
<dbReference type="GeneID" id="257160"/>
<dbReference type="KEGG" id="hsa:257160"/>
<dbReference type="MANE-Select" id="ENST00000300650.9">
    <property type="protein sequence ID" value="ENSP00000300650.4"/>
    <property type="RefSeq nucleotide sequence ID" value="NM_207343.4"/>
    <property type="RefSeq protein sequence ID" value="NP_997226.2"/>
</dbReference>
<dbReference type="UCSC" id="uc001pqt.5">
    <molecule id="Q8ND24-1"/>
    <property type="organism name" value="human"/>
</dbReference>
<dbReference type="AGR" id="HGNC:25335"/>
<dbReference type="CTD" id="257160"/>
<dbReference type="DisGeNET" id="257160"/>
<dbReference type="GeneCards" id="RNF214"/>
<dbReference type="HGNC" id="HGNC:25335">
    <property type="gene designation" value="RNF214"/>
</dbReference>
<dbReference type="HPA" id="ENSG00000167257">
    <property type="expression patterns" value="Low tissue specificity"/>
</dbReference>
<dbReference type="neXtProt" id="NX_Q8ND24"/>
<dbReference type="OpenTargets" id="ENSG00000167257"/>
<dbReference type="PharmGKB" id="PA162401772"/>
<dbReference type="VEuPathDB" id="HostDB:ENSG00000167257"/>
<dbReference type="eggNOG" id="ENOG502QTPR">
    <property type="taxonomic scope" value="Eukaryota"/>
</dbReference>
<dbReference type="GeneTree" id="ENSGT00940000159470"/>
<dbReference type="InParanoid" id="Q8ND24"/>
<dbReference type="OMA" id="AGMEPGW"/>
<dbReference type="OrthoDB" id="9834380at2759"/>
<dbReference type="PAN-GO" id="Q8ND24">
    <property type="GO annotations" value="1 GO annotation based on evolutionary models"/>
</dbReference>
<dbReference type="PhylomeDB" id="Q8ND24"/>
<dbReference type="TreeFam" id="TF333981"/>
<dbReference type="PathwayCommons" id="Q8ND24"/>
<dbReference type="SignaLink" id="Q8ND24"/>
<dbReference type="SIGNOR" id="Q8ND24"/>
<dbReference type="BioGRID-ORCS" id="257160">
    <property type="hits" value="30 hits in 1203 CRISPR screens"/>
</dbReference>
<dbReference type="CD-CODE" id="DEE660B4">
    <property type="entry name" value="Stress granule"/>
</dbReference>
<dbReference type="ChiTaRS" id="RNF214">
    <property type="organism name" value="human"/>
</dbReference>
<dbReference type="GenomeRNAi" id="257160"/>
<dbReference type="Pharos" id="Q8ND24">
    <property type="development level" value="Tdark"/>
</dbReference>
<dbReference type="PRO" id="PR:Q8ND24"/>
<dbReference type="Proteomes" id="UP000005640">
    <property type="component" value="Chromosome 11"/>
</dbReference>
<dbReference type="RNAct" id="Q8ND24">
    <property type="molecule type" value="protein"/>
</dbReference>
<dbReference type="Bgee" id="ENSG00000167257">
    <property type="expression patterns" value="Expressed in primordial germ cell in gonad and 127 other cell types or tissues"/>
</dbReference>
<dbReference type="ExpressionAtlas" id="Q8ND24">
    <property type="expression patterns" value="baseline and differential"/>
</dbReference>
<dbReference type="GO" id="GO:0004842">
    <property type="term" value="F:ubiquitin-protein transferase activity"/>
    <property type="evidence" value="ECO:0000318"/>
    <property type="project" value="GO_Central"/>
</dbReference>
<dbReference type="GO" id="GO:0008270">
    <property type="term" value="F:zinc ion binding"/>
    <property type="evidence" value="ECO:0007669"/>
    <property type="project" value="UniProtKB-KW"/>
</dbReference>
<dbReference type="CDD" id="cd16477">
    <property type="entry name" value="RING-H2_RNF214"/>
    <property type="match status" value="1"/>
</dbReference>
<dbReference type="FunFam" id="3.30.40.10:FF:000227">
    <property type="entry name" value="RING finger protein 214 isoform X1"/>
    <property type="match status" value="1"/>
</dbReference>
<dbReference type="Gene3D" id="3.30.40.10">
    <property type="entry name" value="Zinc/RING finger domain, C3HC4 (zinc finger)"/>
    <property type="match status" value="1"/>
</dbReference>
<dbReference type="InterPro" id="IPR056872">
    <property type="entry name" value="TTC3/DZIP3-like_helical"/>
</dbReference>
<dbReference type="InterPro" id="IPR056870">
    <property type="entry name" value="TTC3/DZIP3/RBM44-like_helical"/>
</dbReference>
<dbReference type="InterPro" id="IPR001841">
    <property type="entry name" value="Znf_RING"/>
</dbReference>
<dbReference type="InterPro" id="IPR013083">
    <property type="entry name" value="Znf_RING/FYVE/PHD"/>
</dbReference>
<dbReference type="PANTHER" id="PTHR15727">
    <property type="entry name" value="RING FINGER PROTEIN 214"/>
    <property type="match status" value="1"/>
</dbReference>
<dbReference type="PANTHER" id="PTHR15727:SF3">
    <property type="entry name" value="RING FINGER PROTEIN 214"/>
    <property type="match status" value="1"/>
</dbReference>
<dbReference type="Pfam" id="PF24525">
    <property type="entry name" value="TTC3"/>
    <property type="match status" value="1"/>
</dbReference>
<dbReference type="Pfam" id="PF24905">
    <property type="entry name" value="TTC3_9th"/>
    <property type="match status" value="1"/>
</dbReference>
<dbReference type="SUPFAM" id="SSF57850">
    <property type="entry name" value="RING/U-box"/>
    <property type="match status" value="1"/>
</dbReference>
<dbReference type="PROSITE" id="PS50089">
    <property type="entry name" value="ZF_RING_2"/>
    <property type="match status" value="1"/>
</dbReference>
<reference key="1">
    <citation type="journal article" date="2004" name="Nat. Genet.">
        <title>Complete sequencing and characterization of 21,243 full-length human cDNAs.</title>
        <authorList>
            <person name="Ota T."/>
            <person name="Suzuki Y."/>
            <person name="Nishikawa T."/>
            <person name="Otsuki T."/>
            <person name="Sugiyama T."/>
            <person name="Irie R."/>
            <person name="Wakamatsu A."/>
            <person name="Hayashi K."/>
            <person name="Sato H."/>
            <person name="Nagai K."/>
            <person name="Kimura K."/>
            <person name="Makita H."/>
            <person name="Sekine M."/>
            <person name="Obayashi M."/>
            <person name="Nishi T."/>
            <person name="Shibahara T."/>
            <person name="Tanaka T."/>
            <person name="Ishii S."/>
            <person name="Yamamoto J."/>
            <person name="Saito K."/>
            <person name="Kawai Y."/>
            <person name="Isono Y."/>
            <person name="Nakamura Y."/>
            <person name="Nagahari K."/>
            <person name="Murakami K."/>
            <person name="Yasuda T."/>
            <person name="Iwayanagi T."/>
            <person name="Wagatsuma M."/>
            <person name="Shiratori A."/>
            <person name="Sudo H."/>
            <person name="Hosoiri T."/>
            <person name="Kaku Y."/>
            <person name="Kodaira H."/>
            <person name="Kondo H."/>
            <person name="Sugawara M."/>
            <person name="Takahashi M."/>
            <person name="Kanda K."/>
            <person name="Yokoi T."/>
            <person name="Furuya T."/>
            <person name="Kikkawa E."/>
            <person name="Omura Y."/>
            <person name="Abe K."/>
            <person name="Kamihara K."/>
            <person name="Katsuta N."/>
            <person name="Sato K."/>
            <person name="Tanikawa M."/>
            <person name="Yamazaki M."/>
            <person name="Ninomiya K."/>
            <person name="Ishibashi T."/>
            <person name="Yamashita H."/>
            <person name="Murakawa K."/>
            <person name="Fujimori K."/>
            <person name="Tanai H."/>
            <person name="Kimata M."/>
            <person name="Watanabe M."/>
            <person name="Hiraoka S."/>
            <person name="Chiba Y."/>
            <person name="Ishida S."/>
            <person name="Ono Y."/>
            <person name="Takiguchi S."/>
            <person name="Watanabe S."/>
            <person name="Yosida M."/>
            <person name="Hotuta T."/>
            <person name="Kusano J."/>
            <person name="Kanehori K."/>
            <person name="Takahashi-Fujii A."/>
            <person name="Hara H."/>
            <person name="Tanase T.-O."/>
            <person name="Nomura Y."/>
            <person name="Togiya S."/>
            <person name="Komai F."/>
            <person name="Hara R."/>
            <person name="Takeuchi K."/>
            <person name="Arita M."/>
            <person name="Imose N."/>
            <person name="Musashino K."/>
            <person name="Yuuki H."/>
            <person name="Oshima A."/>
            <person name="Sasaki N."/>
            <person name="Aotsuka S."/>
            <person name="Yoshikawa Y."/>
            <person name="Matsunawa H."/>
            <person name="Ichihara T."/>
            <person name="Shiohata N."/>
            <person name="Sano S."/>
            <person name="Moriya S."/>
            <person name="Momiyama H."/>
            <person name="Satoh N."/>
            <person name="Takami S."/>
            <person name="Terashima Y."/>
            <person name="Suzuki O."/>
            <person name="Nakagawa S."/>
            <person name="Senoh A."/>
            <person name="Mizoguchi H."/>
            <person name="Goto Y."/>
            <person name="Shimizu F."/>
            <person name="Wakebe H."/>
            <person name="Hishigaki H."/>
            <person name="Watanabe T."/>
            <person name="Sugiyama A."/>
            <person name="Takemoto M."/>
            <person name="Kawakami B."/>
            <person name="Yamazaki M."/>
            <person name="Watanabe K."/>
            <person name="Kumagai A."/>
            <person name="Itakura S."/>
            <person name="Fukuzumi Y."/>
            <person name="Fujimori Y."/>
            <person name="Komiyama M."/>
            <person name="Tashiro H."/>
            <person name="Tanigami A."/>
            <person name="Fujiwara T."/>
            <person name="Ono T."/>
            <person name="Yamada K."/>
            <person name="Fujii Y."/>
            <person name="Ozaki K."/>
            <person name="Hirao M."/>
            <person name="Ohmori Y."/>
            <person name="Kawabata A."/>
            <person name="Hikiji T."/>
            <person name="Kobatake N."/>
            <person name="Inagaki H."/>
            <person name="Ikema Y."/>
            <person name="Okamoto S."/>
            <person name="Okitani R."/>
            <person name="Kawakami T."/>
            <person name="Noguchi S."/>
            <person name="Itoh T."/>
            <person name="Shigeta K."/>
            <person name="Senba T."/>
            <person name="Matsumura K."/>
            <person name="Nakajima Y."/>
            <person name="Mizuno T."/>
            <person name="Morinaga M."/>
            <person name="Sasaki M."/>
            <person name="Togashi T."/>
            <person name="Oyama M."/>
            <person name="Hata H."/>
            <person name="Watanabe M."/>
            <person name="Komatsu T."/>
            <person name="Mizushima-Sugano J."/>
            <person name="Satoh T."/>
            <person name="Shirai Y."/>
            <person name="Takahashi Y."/>
            <person name="Nakagawa K."/>
            <person name="Okumura K."/>
            <person name="Nagase T."/>
            <person name="Nomura N."/>
            <person name="Kikuchi H."/>
            <person name="Masuho Y."/>
            <person name="Yamashita R."/>
            <person name="Nakai K."/>
            <person name="Yada T."/>
            <person name="Nakamura Y."/>
            <person name="Ohara O."/>
            <person name="Isogai T."/>
            <person name="Sugano S."/>
        </authorList>
    </citation>
    <scope>NUCLEOTIDE SEQUENCE [LARGE SCALE MRNA] (ISOFORMS 1 AND 2)</scope>
    <source>
        <tissue>Placenta</tissue>
    </source>
</reference>
<reference key="2">
    <citation type="journal article" date="2006" name="Nature">
        <title>Human chromosome 11 DNA sequence and analysis including novel gene identification.</title>
        <authorList>
            <person name="Taylor T.D."/>
            <person name="Noguchi H."/>
            <person name="Totoki Y."/>
            <person name="Toyoda A."/>
            <person name="Kuroki Y."/>
            <person name="Dewar K."/>
            <person name="Lloyd C."/>
            <person name="Itoh T."/>
            <person name="Takeda T."/>
            <person name="Kim D.-W."/>
            <person name="She X."/>
            <person name="Barlow K.F."/>
            <person name="Bloom T."/>
            <person name="Bruford E."/>
            <person name="Chang J.L."/>
            <person name="Cuomo C.A."/>
            <person name="Eichler E."/>
            <person name="FitzGerald M.G."/>
            <person name="Jaffe D.B."/>
            <person name="LaButti K."/>
            <person name="Nicol R."/>
            <person name="Park H.-S."/>
            <person name="Seaman C."/>
            <person name="Sougnez C."/>
            <person name="Yang X."/>
            <person name="Zimmer A.R."/>
            <person name="Zody M.C."/>
            <person name="Birren B.W."/>
            <person name="Nusbaum C."/>
            <person name="Fujiyama A."/>
            <person name="Hattori M."/>
            <person name="Rogers J."/>
            <person name="Lander E.S."/>
            <person name="Sakaki Y."/>
        </authorList>
    </citation>
    <scope>NUCLEOTIDE SEQUENCE [LARGE SCALE GENOMIC DNA]</scope>
</reference>
<reference key="3">
    <citation type="submission" date="2005-07" db="EMBL/GenBank/DDBJ databases">
        <authorList>
            <person name="Mural R.J."/>
            <person name="Istrail S."/>
            <person name="Sutton G."/>
            <person name="Florea L."/>
            <person name="Halpern A.L."/>
            <person name="Mobarry C.M."/>
            <person name="Lippert R."/>
            <person name="Walenz B."/>
            <person name="Shatkay H."/>
            <person name="Dew I."/>
            <person name="Miller J.R."/>
            <person name="Flanigan M.J."/>
            <person name="Edwards N.J."/>
            <person name="Bolanos R."/>
            <person name="Fasulo D."/>
            <person name="Halldorsson B.V."/>
            <person name="Hannenhalli S."/>
            <person name="Turner R."/>
            <person name="Yooseph S."/>
            <person name="Lu F."/>
            <person name="Nusskern D.R."/>
            <person name="Shue B.C."/>
            <person name="Zheng X.H."/>
            <person name="Zhong F."/>
            <person name="Delcher A.L."/>
            <person name="Huson D.H."/>
            <person name="Kravitz S.A."/>
            <person name="Mouchard L."/>
            <person name="Reinert K."/>
            <person name="Remington K.A."/>
            <person name="Clark A.G."/>
            <person name="Waterman M.S."/>
            <person name="Eichler E.E."/>
            <person name="Adams M.D."/>
            <person name="Hunkapiller M.W."/>
            <person name="Myers E.W."/>
            <person name="Venter J.C."/>
        </authorList>
    </citation>
    <scope>NUCLEOTIDE SEQUENCE [LARGE SCALE GENOMIC DNA]</scope>
</reference>
<reference key="4">
    <citation type="journal article" date="2004" name="Genome Res.">
        <title>The status, quality, and expansion of the NIH full-length cDNA project: the Mammalian Gene Collection (MGC).</title>
        <authorList>
            <consortium name="The MGC Project Team"/>
        </authorList>
    </citation>
    <scope>NUCLEOTIDE SEQUENCE [LARGE SCALE MRNA] (ISOFORM 1)</scope>
    <source>
        <tissue>Brain</tissue>
    </source>
</reference>
<reference key="5">
    <citation type="journal article" date="2007" name="BMC Genomics">
        <title>The full-ORF clone resource of the German cDNA consortium.</title>
        <authorList>
            <person name="Bechtel S."/>
            <person name="Rosenfelder H."/>
            <person name="Duda A."/>
            <person name="Schmidt C.P."/>
            <person name="Ernst U."/>
            <person name="Wellenreuther R."/>
            <person name="Mehrle A."/>
            <person name="Schuster C."/>
            <person name="Bahr A."/>
            <person name="Bloecker H."/>
            <person name="Heubner D."/>
            <person name="Hoerlein A."/>
            <person name="Michel G."/>
            <person name="Wedler H."/>
            <person name="Koehrer K."/>
            <person name="Ottenwaelder B."/>
            <person name="Poustka A."/>
            <person name="Wiemann S."/>
            <person name="Schupp I."/>
        </authorList>
    </citation>
    <scope>NUCLEOTIDE SEQUENCE [LARGE SCALE MRNA] OF 472-703 (ISOFORM 1)</scope>
    <source>
        <tissue>Brain</tissue>
    </source>
</reference>
<reference key="6">
    <citation type="journal article" date="2008" name="Proc. Natl. Acad. Sci. U.S.A.">
        <title>A quantitative atlas of mitotic phosphorylation.</title>
        <authorList>
            <person name="Dephoure N."/>
            <person name="Zhou C."/>
            <person name="Villen J."/>
            <person name="Beausoleil S.A."/>
            <person name="Bakalarski C.E."/>
            <person name="Elledge S.J."/>
            <person name="Gygi S.P."/>
        </authorList>
    </citation>
    <scope>PHOSPHORYLATION [LARGE SCALE ANALYSIS] AT SER-47; SER-497 AND SER-511</scope>
    <scope>IDENTIFICATION BY MASS SPECTROMETRY [LARGE SCALE ANALYSIS]</scope>
    <source>
        <tissue>Cervix carcinoma</tissue>
    </source>
</reference>
<reference key="7">
    <citation type="journal article" date="2009" name="Anal. Chem.">
        <title>Lys-N and trypsin cover complementary parts of the phosphoproteome in a refined SCX-based approach.</title>
        <authorList>
            <person name="Gauci S."/>
            <person name="Helbig A.O."/>
            <person name="Slijper M."/>
            <person name="Krijgsveld J."/>
            <person name="Heck A.J."/>
            <person name="Mohammed S."/>
        </authorList>
    </citation>
    <scope>ACETYLATION [LARGE SCALE ANALYSIS] AT ALA-2</scope>
    <scope>CLEAVAGE OF INITIATOR METHIONINE [LARGE SCALE ANALYSIS]</scope>
    <scope>IDENTIFICATION BY MASS SPECTROMETRY [LARGE SCALE ANALYSIS]</scope>
</reference>
<reference key="8">
    <citation type="journal article" date="2009" name="Sci. Signal.">
        <title>Quantitative phosphoproteomic analysis of T cell receptor signaling reveals system-wide modulation of protein-protein interactions.</title>
        <authorList>
            <person name="Mayya V."/>
            <person name="Lundgren D.H."/>
            <person name="Hwang S.-I."/>
            <person name="Rezaul K."/>
            <person name="Wu L."/>
            <person name="Eng J.K."/>
            <person name="Rodionov V."/>
            <person name="Han D.K."/>
        </authorList>
    </citation>
    <scope>PHOSPHORYLATION [LARGE SCALE ANALYSIS] AT SER-516</scope>
    <scope>IDENTIFICATION BY MASS SPECTROMETRY [LARGE SCALE ANALYSIS]</scope>
    <source>
        <tissue>Leukemic T-cell</tissue>
    </source>
</reference>
<reference key="9">
    <citation type="journal article" date="2010" name="Sci. Signal.">
        <title>Quantitative phosphoproteomics reveals widespread full phosphorylation site occupancy during mitosis.</title>
        <authorList>
            <person name="Olsen J.V."/>
            <person name="Vermeulen M."/>
            <person name="Santamaria A."/>
            <person name="Kumar C."/>
            <person name="Miller M.L."/>
            <person name="Jensen L.J."/>
            <person name="Gnad F."/>
            <person name="Cox J."/>
            <person name="Jensen T.S."/>
            <person name="Nigg E.A."/>
            <person name="Brunak S."/>
            <person name="Mann M."/>
        </authorList>
    </citation>
    <scope>PHOSPHORYLATION [LARGE SCALE ANALYSIS] AT SER-47</scope>
    <scope>IDENTIFICATION BY MASS SPECTROMETRY [LARGE SCALE ANALYSIS]</scope>
    <source>
        <tissue>Cervix carcinoma</tissue>
    </source>
</reference>
<reference key="10">
    <citation type="journal article" date="2011" name="BMC Syst. Biol.">
        <title>Initial characterization of the human central proteome.</title>
        <authorList>
            <person name="Burkard T.R."/>
            <person name="Planyavsky M."/>
            <person name="Kaupe I."/>
            <person name="Breitwieser F.P."/>
            <person name="Buerckstuemmer T."/>
            <person name="Bennett K.L."/>
            <person name="Superti-Furga G."/>
            <person name="Colinge J."/>
        </authorList>
    </citation>
    <scope>IDENTIFICATION BY MASS SPECTROMETRY [LARGE SCALE ANALYSIS]</scope>
</reference>
<reference key="11">
    <citation type="journal article" date="2013" name="J. Proteome Res.">
        <title>Toward a comprehensive characterization of a human cancer cell phosphoproteome.</title>
        <authorList>
            <person name="Zhou H."/>
            <person name="Di Palma S."/>
            <person name="Preisinger C."/>
            <person name="Peng M."/>
            <person name="Polat A.N."/>
            <person name="Heck A.J."/>
            <person name="Mohammed S."/>
        </authorList>
    </citation>
    <scope>PHOSPHORYLATION [LARGE SCALE ANALYSIS] AT SER-15; SER-40; SER-47; SER-54 AND SER-176</scope>
    <scope>IDENTIFICATION BY MASS SPECTROMETRY [LARGE SCALE ANALYSIS]</scope>
    <source>
        <tissue>Cervix carcinoma</tissue>
        <tissue>Erythroleukemia</tissue>
    </source>
</reference>
<name>RN214_HUMAN</name>
<protein>
    <recommendedName>
        <fullName>RING finger protein 214</fullName>
    </recommendedName>
</protein>
<evidence type="ECO:0000250" key="1">
    <source>
        <dbReference type="UniProtKB" id="Q8BFU3"/>
    </source>
</evidence>
<evidence type="ECO:0000255" key="2"/>
<evidence type="ECO:0000255" key="3">
    <source>
        <dbReference type="PROSITE-ProRule" id="PRU00175"/>
    </source>
</evidence>
<evidence type="ECO:0000256" key="4">
    <source>
        <dbReference type="SAM" id="MobiDB-lite"/>
    </source>
</evidence>
<evidence type="ECO:0000303" key="5">
    <source>
    </source>
</evidence>
<evidence type="ECO:0007744" key="6">
    <source>
    </source>
</evidence>
<evidence type="ECO:0007744" key="7">
    <source>
    </source>
</evidence>
<evidence type="ECO:0007744" key="8">
    <source>
    </source>
</evidence>
<evidence type="ECO:0007744" key="9">
    <source>
    </source>
</evidence>
<evidence type="ECO:0007744" key="10">
    <source>
    </source>
</evidence>